<dbReference type="EC" id="7.5.2.6" evidence="1"/>
<dbReference type="EMBL" id="CP000058">
    <property type="protein sequence ID" value="AAZ36650.1"/>
    <property type="status" value="ALT_INIT"/>
    <property type="molecule type" value="Genomic_DNA"/>
</dbReference>
<dbReference type="RefSeq" id="WP_019742283.1">
    <property type="nucleotide sequence ID" value="NC_005773.3"/>
</dbReference>
<dbReference type="SMR" id="Q48P40"/>
<dbReference type="KEGG" id="psp:PSPPH_0527"/>
<dbReference type="eggNOG" id="COG1132">
    <property type="taxonomic scope" value="Bacteria"/>
</dbReference>
<dbReference type="HOGENOM" id="CLU_000604_84_3_6"/>
<dbReference type="Proteomes" id="UP000000551">
    <property type="component" value="Chromosome"/>
</dbReference>
<dbReference type="GO" id="GO:0005886">
    <property type="term" value="C:plasma membrane"/>
    <property type="evidence" value="ECO:0007669"/>
    <property type="project" value="UniProtKB-SubCell"/>
</dbReference>
<dbReference type="GO" id="GO:0015421">
    <property type="term" value="F:ABC-type oligopeptide transporter activity"/>
    <property type="evidence" value="ECO:0007669"/>
    <property type="project" value="TreeGrafter"/>
</dbReference>
<dbReference type="GO" id="GO:0005524">
    <property type="term" value="F:ATP binding"/>
    <property type="evidence" value="ECO:0007669"/>
    <property type="project" value="UniProtKB-KW"/>
</dbReference>
<dbReference type="GO" id="GO:0016887">
    <property type="term" value="F:ATP hydrolysis activity"/>
    <property type="evidence" value="ECO:0007669"/>
    <property type="project" value="InterPro"/>
</dbReference>
<dbReference type="GO" id="GO:0034040">
    <property type="term" value="F:ATPase-coupled lipid transmembrane transporter activity"/>
    <property type="evidence" value="ECO:0007669"/>
    <property type="project" value="InterPro"/>
</dbReference>
<dbReference type="CDD" id="cd18552">
    <property type="entry name" value="ABC_6TM_MsbA_like"/>
    <property type="match status" value="1"/>
</dbReference>
<dbReference type="FunFam" id="3.40.50.300:FF:000140">
    <property type="entry name" value="Lipid A export ATP-binding/permease protein MsbA"/>
    <property type="match status" value="1"/>
</dbReference>
<dbReference type="Gene3D" id="1.20.1560.10">
    <property type="entry name" value="ABC transporter type 1, transmembrane domain"/>
    <property type="match status" value="1"/>
</dbReference>
<dbReference type="Gene3D" id="3.40.50.300">
    <property type="entry name" value="P-loop containing nucleotide triphosphate hydrolases"/>
    <property type="match status" value="1"/>
</dbReference>
<dbReference type="InterPro" id="IPR003593">
    <property type="entry name" value="AAA+_ATPase"/>
</dbReference>
<dbReference type="InterPro" id="IPR011527">
    <property type="entry name" value="ABC1_TM_dom"/>
</dbReference>
<dbReference type="InterPro" id="IPR036640">
    <property type="entry name" value="ABC1_TM_sf"/>
</dbReference>
<dbReference type="InterPro" id="IPR003439">
    <property type="entry name" value="ABC_transporter-like_ATP-bd"/>
</dbReference>
<dbReference type="InterPro" id="IPR017871">
    <property type="entry name" value="ABC_transporter-like_CS"/>
</dbReference>
<dbReference type="InterPro" id="IPR011917">
    <property type="entry name" value="ABC_transpr_lipidA"/>
</dbReference>
<dbReference type="InterPro" id="IPR027417">
    <property type="entry name" value="P-loop_NTPase"/>
</dbReference>
<dbReference type="InterPro" id="IPR039421">
    <property type="entry name" value="Type_1_exporter"/>
</dbReference>
<dbReference type="NCBIfam" id="TIGR02203">
    <property type="entry name" value="MsbA_lipidA"/>
    <property type="match status" value="1"/>
</dbReference>
<dbReference type="PANTHER" id="PTHR43394:SF1">
    <property type="entry name" value="ATP-BINDING CASSETTE SUB-FAMILY B MEMBER 10, MITOCHONDRIAL"/>
    <property type="match status" value="1"/>
</dbReference>
<dbReference type="PANTHER" id="PTHR43394">
    <property type="entry name" value="ATP-DEPENDENT PERMEASE MDL1, MITOCHONDRIAL"/>
    <property type="match status" value="1"/>
</dbReference>
<dbReference type="Pfam" id="PF00664">
    <property type="entry name" value="ABC_membrane"/>
    <property type="match status" value="1"/>
</dbReference>
<dbReference type="Pfam" id="PF00005">
    <property type="entry name" value="ABC_tran"/>
    <property type="match status" value="1"/>
</dbReference>
<dbReference type="SMART" id="SM00382">
    <property type="entry name" value="AAA"/>
    <property type="match status" value="1"/>
</dbReference>
<dbReference type="SUPFAM" id="SSF90123">
    <property type="entry name" value="ABC transporter transmembrane region"/>
    <property type="match status" value="1"/>
</dbReference>
<dbReference type="SUPFAM" id="SSF52540">
    <property type="entry name" value="P-loop containing nucleoside triphosphate hydrolases"/>
    <property type="match status" value="1"/>
</dbReference>
<dbReference type="PROSITE" id="PS50929">
    <property type="entry name" value="ABC_TM1F"/>
    <property type="match status" value="1"/>
</dbReference>
<dbReference type="PROSITE" id="PS00211">
    <property type="entry name" value="ABC_TRANSPORTER_1"/>
    <property type="match status" value="1"/>
</dbReference>
<dbReference type="PROSITE" id="PS50893">
    <property type="entry name" value="ABC_TRANSPORTER_2"/>
    <property type="match status" value="1"/>
</dbReference>
<dbReference type="PROSITE" id="PS51239">
    <property type="entry name" value="MSBA"/>
    <property type="match status" value="1"/>
</dbReference>
<keyword id="KW-0067">ATP-binding</keyword>
<keyword id="KW-0997">Cell inner membrane</keyword>
<keyword id="KW-1003">Cell membrane</keyword>
<keyword id="KW-0445">Lipid transport</keyword>
<keyword id="KW-0472">Membrane</keyword>
<keyword id="KW-0547">Nucleotide-binding</keyword>
<keyword id="KW-1278">Translocase</keyword>
<keyword id="KW-0812">Transmembrane</keyword>
<keyword id="KW-1133">Transmembrane helix</keyword>
<keyword id="KW-0813">Transport</keyword>
<accession>Q48P40</accession>
<comment type="function">
    <text evidence="1">Involved in lipopolysaccharide (LPS) biosynthesis. Translocates lipid A-core from the inner to the outer leaflet of the inner membrane. Transmembrane domains (TMD) form a pore in the inner membrane and the ATP-binding domain (NBD) is responsible for energy generation.</text>
</comment>
<comment type="catalytic activity">
    <reaction evidence="1">
        <text>ATP + H2O + lipid A-core oligosaccharideSide 1 = ADP + phosphate + lipid A-core oligosaccharideSide 2.</text>
        <dbReference type="EC" id="7.5.2.6"/>
    </reaction>
</comment>
<comment type="subunit">
    <text evidence="1">Homodimer.</text>
</comment>
<comment type="subcellular location">
    <subcellularLocation>
        <location evidence="1">Cell inner membrane</location>
        <topology evidence="1">Multi-pass membrane protein</topology>
    </subcellularLocation>
</comment>
<comment type="domain">
    <text evidence="1">In MsbA the ATP-binding domain (NBD) and the transmembrane domain (TMD) are fused.</text>
</comment>
<comment type="similarity">
    <text evidence="1">Belongs to the ABC transporter superfamily. Lipid exporter (TC 3.A.1.106) family.</text>
</comment>
<comment type="sequence caution" evidence="2">
    <conflict type="erroneous initiation">
        <sequence resource="EMBL-CDS" id="AAZ36650"/>
    </conflict>
</comment>
<name>MSBA_PSE14</name>
<protein>
    <recommendedName>
        <fullName evidence="1">ATP-dependent lipid A-core flippase</fullName>
        <ecNumber evidence="1">7.5.2.6</ecNumber>
    </recommendedName>
    <alternativeName>
        <fullName evidence="1">Lipid A export ATP-binding/permease protein MsbA</fullName>
    </alternativeName>
</protein>
<feature type="chain" id="PRO_0000271642" description="ATP-dependent lipid A-core flippase">
    <location>
        <begin position="1"/>
        <end position="600"/>
    </location>
</feature>
<feature type="transmembrane region" description="Helical" evidence="1">
    <location>
        <begin position="26"/>
        <end position="46"/>
    </location>
</feature>
<feature type="transmembrane region" description="Helical" evidence="1">
    <location>
        <begin position="82"/>
        <end position="102"/>
    </location>
</feature>
<feature type="transmembrane region" description="Helical" evidence="1">
    <location>
        <begin position="167"/>
        <end position="187"/>
    </location>
</feature>
<feature type="transmembrane region" description="Helical" evidence="1">
    <location>
        <begin position="266"/>
        <end position="286"/>
    </location>
</feature>
<feature type="domain" description="ABC transmembrane type-1" evidence="1">
    <location>
        <begin position="30"/>
        <end position="321"/>
    </location>
</feature>
<feature type="domain" description="ABC transporter" evidence="1">
    <location>
        <begin position="353"/>
        <end position="589"/>
    </location>
</feature>
<feature type="binding site" evidence="1">
    <location>
        <begin position="387"/>
        <end position="394"/>
    </location>
    <ligand>
        <name>ATP</name>
        <dbReference type="ChEBI" id="CHEBI:30616"/>
    </ligand>
</feature>
<evidence type="ECO:0000255" key="1">
    <source>
        <dbReference type="HAMAP-Rule" id="MF_01703"/>
    </source>
</evidence>
<evidence type="ECO:0000305" key="2"/>
<proteinExistence type="inferred from homology"/>
<gene>
    <name evidence="1" type="primary">msbA</name>
    <name type="ordered locus">PSPPH_0527</name>
</gene>
<organism>
    <name type="scientific">Pseudomonas savastanoi pv. phaseolicola (strain 1448A / Race 6)</name>
    <name type="common">Pseudomonas syringae pv. phaseolicola (strain 1448A / Race 6)</name>
    <dbReference type="NCBI Taxonomy" id="264730"/>
    <lineage>
        <taxon>Bacteria</taxon>
        <taxon>Pseudomonadati</taxon>
        <taxon>Pseudomonadota</taxon>
        <taxon>Gammaproteobacteria</taxon>
        <taxon>Pseudomonadales</taxon>
        <taxon>Pseudomonadaceae</taxon>
        <taxon>Pseudomonas</taxon>
    </lineage>
</organism>
<reference key="1">
    <citation type="journal article" date="2005" name="J. Bacteriol.">
        <title>Whole-genome sequence analysis of Pseudomonas syringae pv. phaseolicola 1448A reveals divergence among pathovars in genes involved in virulence and transposition.</title>
        <authorList>
            <person name="Joardar V."/>
            <person name="Lindeberg M."/>
            <person name="Jackson R.W."/>
            <person name="Selengut J."/>
            <person name="Dodson R."/>
            <person name="Brinkac L.M."/>
            <person name="Daugherty S.C."/>
            <person name="DeBoy R.T."/>
            <person name="Durkin A.S."/>
            <person name="Gwinn Giglio M."/>
            <person name="Madupu R."/>
            <person name="Nelson W.C."/>
            <person name="Rosovitz M.J."/>
            <person name="Sullivan S.A."/>
            <person name="Crabtree J."/>
            <person name="Creasy T."/>
            <person name="Davidsen T.M."/>
            <person name="Haft D.H."/>
            <person name="Zafar N."/>
            <person name="Zhou L."/>
            <person name="Halpin R."/>
            <person name="Holley T."/>
            <person name="Khouri H.M."/>
            <person name="Feldblyum T.V."/>
            <person name="White O."/>
            <person name="Fraser C.M."/>
            <person name="Chatterjee A.K."/>
            <person name="Cartinhour S."/>
            <person name="Schneider D."/>
            <person name="Mansfield J.W."/>
            <person name="Collmer A."/>
            <person name="Buell R."/>
        </authorList>
    </citation>
    <scope>NUCLEOTIDE SEQUENCE [LARGE SCALE GENOMIC DNA]</scope>
    <source>
        <strain>1448A / Race 6</strain>
    </source>
</reference>
<sequence length="600" mass="65827">MTTSESSSTSSVKIYFRLLSYVRPHVGIFLLSIIGFVIFASTQPMLAGILKYFVDGLTNPEAVLFPNVPYLRELQLLQAVPLLIVLIAAWQGLGSFLGNYFLAKVSLGLVHDLRVELFNKLLVLPNRYFDTTNSGHLISRITFNVTMVTGAATDAIKVVIREGLTVVFLFIYLLMMNWKLTLVMLAILPLIAVMVGSASKKFRKQSKKIQVAMGDVTHVASETIQGYRVVRSFGGESYEQNRFAQASDSNTRKQLRMTKTGAIYTPMLQLVIYSAMAVLMFLVLFLRGDATAGDLVAYITAAGLLPKPIRQLSEVSSTIQKGVAGAESIFEQLDVEEEVDTGTIERDRVTGHLEVKNLSFFYPQTERQVLNDISFSAAPGQMIALVGRSGSGKSTLANLIPRFYGHEMGNILLDGVEINDYRLRNLRKHIAQVNQNVTLFNDTIANNIAYGDLAGAPRADIEAAAADAYAKEFIDQLPQGFDTQVGENGVLLSGGQRQRLAIARALLKNAPLLILDEATSALDTESERHIQAALDHVMKGRTTLVIAHRLSTIEKADMILVMDAGQIVERGTHTELLAQNGYYARLHAMGLDEPSPVGAV</sequence>